<sequence>MNIPQELKYTKDHEWVKIDGDTVTIGVTDFAQGELGDIVYVEVETLDETLDKEEVFGTVEAVKTVSDLYMPVSGEIIEFNESLEDEPEKVNEDPYGEGWMIKIKLSDTSELEDLLSADEYKEVVGS</sequence>
<gene>
    <name evidence="1" type="primary">gcvH</name>
    <name type="ordered locus">GFO_0183</name>
</gene>
<keyword id="KW-0450">Lipoyl</keyword>
<dbReference type="EMBL" id="CU207366">
    <property type="protein sequence ID" value="CAL65171.1"/>
    <property type="molecule type" value="Genomic_DNA"/>
</dbReference>
<dbReference type="RefSeq" id="WP_011708109.1">
    <property type="nucleotide sequence ID" value="NC_008571.1"/>
</dbReference>
<dbReference type="SMR" id="A0LXS6"/>
<dbReference type="STRING" id="411154.GFO_0183"/>
<dbReference type="KEGG" id="gfo:GFO_0183"/>
<dbReference type="eggNOG" id="COG0509">
    <property type="taxonomic scope" value="Bacteria"/>
</dbReference>
<dbReference type="HOGENOM" id="CLU_097408_2_2_10"/>
<dbReference type="OrthoDB" id="9796712at2"/>
<dbReference type="Proteomes" id="UP000000755">
    <property type="component" value="Chromosome"/>
</dbReference>
<dbReference type="GO" id="GO:0005829">
    <property type="term" value="C:cytosol"/>
    <property type="evidence" value="ECO:0007669"/>
    <property type="project" value="TreeGrafter"/>
</dbReference>
<dbReference type="GO" id="GO:0005960">
    <property type="term" value="C:glycine cleavage complex"/>
    <property type="evidence" value="ECO:0007669"/>
    <property type="project" value="InterPro"/>
</dbReference>
<dbReference type="GO" id="GO:0019464">
    <property type="term" value="P:glycine decarboxylation via glycine cleavage system"/>
    <property type="evidence" value="ECO:0007669"/>
    <property type="project" value="UniProtKB-UniRule"/>
</dbReference>
<dbReference type="CDD" id="cd06848">
    <property type="entry name" value="GCS_H"/>
    <property type="match status" value="1"/>
</dbReference>
<dbReference type="Gene3D" id="2.40.50.100">
    <property type="match status" value="1"/>
</dbReference>
<dbReference type="HAMAP" id="MF_00272">
    <property type="entry name" value="GcvH"/>
    <property type="match status" value="1"/>
</dbReference>
<dbReference type="InterPro" id="IPR003016">
    <property type="entry name" value="2-oxoA_DH_lipoyl-BS"/>
</dbReference>
<dbReference type="InterPro" id="IPR000089">
    <property type="entry name" value="Biotin_lipoyl"/>
</dbReference>
<dbReference type="InterPro" id="IPR002930">
    <property type="entry name" value="GCV_H"/>
</dbReference>
<dbReference type="InterPro" id="IPR033753">
    <property type="entry name" value="GCV_H/Fam206"/>
</dbReference>
<dbReference type="InterPro" id="IPR017453">
    <property type="entry name" value="GCV_H_sub"/>
</dbReference>
<dbReference type="InterPro" id="IPR011053">
    <property type="entry name" value="Single_hybrid_motif"/>
</dbReference>
<dbReference type="NCBIfam" id="TIGR00527">
    <property type="entry name" value="gcvH"/>
    <property type="match status" value="1"/>
</dbReference>
<dbReference type="NCBIfam" id="NF002270">
    <property type="entry name" value="PRK01202.1"/>
    <property type="match status" value="1"/>
</dbReference>
<dbReference type="PANTHER" id="PTHR11715">
    <property type="entry name" value="GLYCINE CLEAVAGE SYSTEM H PROTEIN"/>
    <property type="match status" value="1"/>
</dbReference>
<dbReference type="PANTHER" id="PTHR11715:SF3">
    <property type="entry name" value="GLYCINE CLEAVAGE SYSTEM H PROTEIN-RELATED"/>
    <property type="match status" value="1"/>
</dbReference>
<dbReference type="Pfam" id="PF01597">
    <property type="entry name" value="GCV_H"/>
    <property type="match status" value="1"/>
</dbReference>
<dbReference type="SUPFAM" id="SSF51230">
    <property type="entry name" value="Single hybrid motif"/>
    <property type="match status" value="1"/>
</dbReference>
<dbReference type="PROSITE" id="PS50968">
    <property type="entry name" value="BIOTINYL_LIPOYL"/>
    <property type="match status" value="1"/>
</dbReference>
<dbReference type="PROSITE" id="PS00189">
    <property type="entry name" value="LIPOYL"/>
    <property type="match status" value="1"/>
</dbReference>
<comment type="function">
    <text evidence="1">The glycine cleavage system catalyzes the degradation of glycine. The H protein shuttles the methylamine group of glycine from the P protein to the T protein.</text>
</comment>
<comment type="cofactor">
    <cofactor evidence="1">
        <name>(R)-lipoate</name>
        <dbReference type="ChEBI" id="CHEBI:83088"/>
    </cofactor>
    <text evidence="1">Binds 1 lipoyl cofactor covalently.</text>
</comment>
<comment type="subunit">
    <text evidence="1">The glycine cleavage system is composed of four proteins: P, T, L and H.</text>
</comment>
<comment type="similarity">
    <text evidence="1">Belongs to the GcvH family.</text>
</comment>
<feature type="chain" id="PRO_0000302380" description="Glycine cleavage system H protein">
    <location>
        <begin position="1"/>
        <end position="126"/>
    </location>
</feature>
<feature type="domain" description="Lipoyl-binding" evidence="2">
    <location>
        <begin position="22"/>
        <end position="104"/>
    </location>
</feature>
<feature type="modified residue" description="N6-lipoyllysine" evidence="1">
    <location>
        <position position="63"/>
    </location>
</feature>
<evidence type="ECO:0000255" key="1">
    <source>
        <dbReference type="HAMAP-Rule" id="MF_00272"/>
    </source>
</evidence>
<evidence type="ECO:0000255" key="2">
    <source>
        <dbReference type="PROSITE-ProRule" id="PRU01066"/>
    </source>
</evidence>
<protein>
    <recommendedName>
        <fullName evidence="1">Glycine cleavage system H protein</fullName>
    </recommendedName>
</protein>
<name>GCSH_CHRFK</name>
<proteinExistence type="inferred from homology"/>
<accession>A0LXS6</accession>
<reference key="1">
    <citation type="journal article" date="2006" name="Environ. Microbiol.">
        <title>Whole genome analysis of the marine Bacteroidetes'Gramella forsetii' reveals adaptations to degradation of polymeric organic matter.</title>
        <authorList>
            <person name="Bauer M."/>
            <person name="Kube M."/>
            <person name="Teeling H."/>
            <person name="Richter M."/>
            <person name="Lombardot T."/>
            <person name="Allers E."/>
            <person name="Wuerdemann C.A."/>
            <person name="Quast C."/>
            <person name="Kuhl H."/>
            <person name="Knaust F."/>
            <person name="Woebken D."/>
            <person name="Bischof K."/>
            <person name="Mussmann M."/>
            <person name="Choudhuri J.V."/>
            <person name="Meyer F."/>
            <person name="Reinhardt R."/>
            <person name="Amann R.I."/>
            <person name="Gloeckner F.O."/>
        </authorList>
    </citation>
    <scope>NUCLEOTIDE SEQUENCE [LARGE SCALE GENOMIC DNA]</scope>
    <source>
        <strain>DSM 17595 / CGMCC 1.15422 / KT0803</strain>
    </source>
</reference>
<organism>
    <name type="scientific">Christiangramia forsetii (strain DSM 17595 / CGMCC 1.15422 / KT0803)</name>
    <name type="common">Gramella forsetii</name>
    <dbReference type="NCBI Taxonomy" id="411154"/>
    <lineage>
        <taxon>Bacteria</taxon>
        <taxon>Pseudomonadati</taxon>
        <taxon>Bacteroidota</taxon>
        <taxon>Flavobacteriia</taxon>
        <taxon>Flavobacteriales</taxon>
        <taxon>Flavobacteriaceae</taxon>
        <taxon>Christiangramia</taxon>
    </lineage>
</organism>